<protein>
    <recommendedName>
        <fullName evidence="1">Large ribosomal subunit protein uL13</fullName>
    </recommendedName>
    <alternativeName>
        <fullName evidence="2">50S ribosomal protein L13</fullName>
    </alternativeName>
</protein>
<name>RL13_VIBVY</name>
<organism>
    <name type="scientific">Vibrio vulnificus (strain YJ016)</name>
    <dbReference type="NCBI Taxonomy" id="196600"/>
    <lineage>
        <taxon>Bacteria</taxon>
        <taxon>Pseudomonadati</taxon>
        <taxon>Pseudomonadota</taxon>
        <taxon>Gammaproteobacteria</taxon>
        <taxon>Vibrionales</taxon>
        <taxon>Vibrionaceae</taxon>
        <taxon>Vibrio</taxon>
    </lineage>
</organism>
<accession>Q7MNX1</accession>
<keyword id="KW-0687">Ribonucleoprotein</keyword>
<keyword id="KW-0689">Ribosomal protein</keyword>
<proteinExistence type="inferred from homology"/>
<comment type="function">
    <text evidence="1">This protein is one of the early assembly proteins of the 50S ribosomal subunit, although it is not seen to bind rRNA by itself. It is important during the early stages of 50S assembly.</text>
</comment>
<comment type="subunit">
    <text evidence="1">Part of the 50S ribosomal subunit.</text>
</comment>
<comment type="similarity">
    <text evidence="1">Belongs to the universal ribosomal protein uL13 family.</text>
</comment>
<reference key="1">
    <citation type="journal article" date="2003" name="Genome Res.">
        <title>Comparative genome analysis of Vibrio vulnificus, a marine pathogen.</title>
        <authorList>
            <person name="Chen C.-Y."/>
            <person name="Wu K.-M."/>
            <person name="Chang Y.-C."/>
            <person name="Chang C.-H."/>
            <person name="Tsai H.-C."/>
            <person name="Liao T.-L."/>
            <person name="Liu Y.-M."/>
            <person name="Chen H.-J."/>
            <person name="Shen A.B.-T."/>
            <person name="Li J.-C."/>
            <person name="Su T.-L."/>
            <person name="Shao C.-P."/>
            <person name="Lee C.-T."/>
            <person name="Hor L.-I."/>
            <person name="Tsai S.-F."/>
        </authorList>
    </citation>
    <scope>NUCLEOTIDE SEQUENCE [LARGE SCALE GENOMIC DNA]</scope>
    <source>
        <strain>YJ016</strain>
    </source>
</reference>
<sequence>MKTFVAKPETVKRDWYVVDAEGKTLGRLASEIASRLRGKHKAEYTPHVDTGDYIIVINAEKVTVTGNKAAAKTYYRHTEFPGGIKSITFDKLIVRKPEMVIELAVKGMLPRGPLGRAMYRKLKVYAGAEHNHVAQQPKVLDI</sequence>
<gene>
    <name evidence="1" type="primary">rplM</name>
    <name type="ordered locus">VV0594</name>
</gene>
<feature type="chain" id="PRO_0000261824" description="Large ribosomal subunit protein uL13">
    <location>
        <begin position="1"/>
        <end position="142"/>
    </location>
</feature>
<evidence type="ECO:0000255" key="1">
    <source>
        <dbReference type="HAMAP-Rule" id="MF_01366"/>
    </source>
</evidence>
<evidence type="ECO:0000305" key="2"/>
<dbReference type="EMBL" id="BA000037">
    <property type="protein sequence ID" value="BAC93358.1"/>
    <property type="molecule type" value="Genomic_DNA"/>
</dbReference>
<dbReference type="RefSeq" id="WP_011078684.1">
    <property type="nucleotide sequence ID" value="NC_005139.1"/>
</dbReference>
<dbReference type="SMR" id="Q7MNX1"/>
<dbReference type="STRING" id="672.VV93_v1c05350"/>
<dbReference type="GeneID" id="93894911"/>
<dbReference type="KEGG" id="vvy:VV0594"/>
<dbReference type="eggNOG" id="COG0102">
    <property type="taxonomic scope" value="Bacteria"/>
</dbReference>
<dbReference type="HOGENOM" id="CLU_082184_2_2_6"/>
<dbReference type="Proteomes" id="UP000002675">
    <property type="component" value="Chromosome I"/>
</dbReference>
<dbReference type="GO" id="GO:0022625">
    <property type="term" value="C:cytosolic large ribosomal subunit"/>
    <property type="evidence" value="ECO:0007669"/>
    <property type="project" value="TreeGrafter"/>
</dbReference>
<dbReference type="GO" id="GO:0003729">
    <property type="term" value="F:mRNA binding"/>
    <property type="evidence" value="ECO:0007669"/>
    <property type="project" value="TreeGrafter"/>
</dbReference>
<dbReference type="GO" id="GO:0003735">
    <property type="term" value="F:structural constituent of ribosome"/>
    <property type="evidence" value="ECO:0007669"/>
    <property type="project" value="InterPro"/>
</dbReference>
<dbReference type="GO" id="GO:0017148">
    <property type="term" value="P:negative regulation of translation"/>
    <property type="evidence" value="ECO:0007669"/>
    <property type="project" value="TreeGrafter"/>
</dbReference>
<dbReference type="GO" id="GO:0006412">
    <property type="term" value="P:translation"/>
    <property type="evidence" value="ECO:0007669"/>
    <property type="project" value="UniProtKB-UniRule"/>
</dbReference>
<dbReference type="CDD" id="cd00392">
    <property type="entry name" value="Ribosomal_L13"/>
    <property type="match status" value="1"/>
</dbReference>
<dbReference type="FunFam" id="3.90.1180.10:FF:000001">
    <property type="entry name" value="50S ribosomal protein L13"/>
    <property type="match status" value="1"/>
</dbReference>
<dbReference type="Gene3D" id="3.90.1180.10">
    <property type="entry name" value="Ribosomal protein L13"/>
    <property type="match status" value="1"/>
</dbReference>
<dbReference type="HAMAP" id="MF_01366">
    <property type="entry name" value="Ribosomal_uL13"/>
    <property type="match status" value="1"/>
</dbReference>
<dbReference type="InterPro" id="IPR005822">
    <property type="entry name" value="Ribosomal_uL13"/>
</dbReference>
<dbReference type="InterPro" id="IPR005823">
    <property type="entry name" value="Ribosomal_uL13_bac-type"/>
</dbReference>
<dbReference type="InterPro" id="IPR023563">
    <property type="entry name" value="Ribosomal_uL13_CS"/>
</dbReference>
<dbReference type="InterPro" id="IPR036899">
    <property type="entry name" value="Ribosomal_uL13_sf"/>
</dbReference>
<dbReference type="NCBIfam" id="TIGR01066">
    <property type="entry name" value="rplM_bact"/>
    <property type="match status" value="1"/>
</dbReference>
<dbReference type="PANTHER" id="PTHR11545:SF2">
    <property type="entry name" value="LARGE RIBOSOMAL SUBUNIT PROTEIN UL13M"/>
    <property type="match status" value="1"/>
</dbReference>
<dbReference type="PANTHER" id="PTHR11545">
    <property type="entry name" value="RIBOSOMAL PROTEIN L13"/>
    <property type="match status" value="1"/>
</dbReference>
<dbReference type="Pfam" id="PF00572">
    <property type="entry name" value="Ribosomal_L13"/>
    <property type="match status" value="1"/>
</dbReference>
<dbReference type="PIRSF" id="PIRSF002181">
    <property type="entry name" value="Ribosomal_L13"/>
    <property type="match status" value="1"/>
</dbReference>
<dbReference type="SUPFAM" id="SSF52161">
    <property type="entry name" value="Ribosomal protein L13"/>
    <property type="match status" value="1"/>
</dbReference>
<dbReference type="PROSITE" id="PS00783">
    <property type="entry name" value="RIBOSOMAL_L13"/>
    <property type="match status" value="1"/>
</dbReference>